<name>CIMA_METMA</name>
<keyword id="KW-0028">Amino-acid biosynthesis</keyword>
<keyword id="KW-0100">Branched-chain amino acid biosynthesis</keyword>
<keyword id="KW-0412">Isoleucine biosynthesis</keyword>
<keyword id="KW-0808">Transferase</keyword>
<comment type="function">
    <text evidence="1">Catalyzes the condensation of pyruvate and acetyl-coenzyme A to form (R)-citramalate.</text>
</comment>
<comment type="catalytic activity">
    <reaction evidence="1">
        <text>pyruvate + acetyl-CoA + H2O = (3R)-citramalate + CoA + H(+)</text>
        <dbReference type="Rhea" id="RHEA:19045"/>
        <dbReference type="ChEBI" id="CHEBI:15361"/>
        <dbReference type="ChEBI" id="CHEBI:15377"/>
        <dbReference type="ChEBI" id="CHEBI:15378"/>
        <dbReference type="ChEBI" id="CHEBI:30934"/>
        <dbReference type="ChEBI" id="CHEBI:57287"/>
        <dbReference type="ChEBI" id="CHEBI:57288"/>
        <dbReference type="EC" id="2.3.3.21"/>
    </reaction>
</comment>
<comment type="pathway">
    <text evidence="1">Amino-acid biosynthesis; L-isoleucine biosynthesis; 2-oxobutanoate from pyruvate: step 1/3.</text>
</comment>
<comment type="subunit">
    <text evidence="1">Homodimer.</text>
</comment>
<comment type="similarity">
    <text evidence="1">Belongs to the alpha-IPM synthase/homocitrate synthase family.</text>
</comment>
<dbReference type="EC" id="2.3.3.21" evidence="1"/>
<dbReference type="EMBL" id="AE008384">
    <property type="protein sequence ID" value="AAM30367.1"/>
    <property type="molecule type" value="Genomic_DNA"/>
</dbReference>
<dbReference type="SMR" id="P58966"/>
<dbReference type="KEGG" id="mma:MM_0671"/>
<dbReference type="PATRIC" id="fig|192952.21.peg.797"/>
<dbReference type="eggNOG" id="arCOG02092">
    <property type="taxonomic scope" value="Archaea"/>
</dbReference>
<dbReference type="HOGENOM" id="CLU_022158_0_1_2"/>
<dbReference type="UniPathway" id="UPA00047">
    <property type="reaction ID" value="UER00066"/>
</dbReference>
<dbReference type="Proteomes" id="UP000000595">
    <property type="component" value="Chromosome"/>
</dbReference>
<dbReference type="GO" id="GO:0043714">
    <property type="term" value="F:(R)-citramalate synthase activity"/>
    <property type="evidence" value="ECO:0007669"/>
    <property type="project" value="InterPro"/>
</dbReference>
<dbReference type="GO" id="GO:0003852">
    <property type="term" value="F:2-isopropylmalate synthase activity"/>
    <property type="evidence" value="ECO:0007669"/>
    <property type="project" value="InterPro"/>
</dbReference>
<dbReference type="GO" id="GO:0009097">
    <property type="term" value="P:isoleucine biosynthetic process"/>
    <property type="evidence" value="ECO:0007669"/>
    <property type="project" value="UniProtKB-UniRule"/>
</dbReference>
<dbReference type="GO" id="GO:0009098">
    <property type="term" value="P:L-leucine biosynthetic process"/>
    <property type="evidence" value="ECO:0007669"/>
    <property type="project" value="InterPro"/>
</dbReference>
<dbReference type="CDD" id="cd07940">
    <property type="entry name" value="DRE_TIM_IPMS"/>
    <property type="match status" value="1"/>
</dbReference>
<dbReference type="FunFam" id="1.10.238.260:FF:000001">
    <property type="entry name" value="2-isopropylmalate synthase"/>
    <property type="match status" value="1"/>
</dbReference>
<dbReference type="FunFam" id="3.20.20.70:FF:000010">
    <property type="entry name" value="2-isopropylmalate synthase"/>
    <property type="match status" value="1"/>
</dbReference>
<dbReference type="FunFam" id="3.30.160.270:FF:000003">
    <property type="entry name" value="2-isopropylmalate synthase"/>
    <property type="match status" value="1"/>
</dbReference>
<dbReference type="Gene3D" id="1.10.238.260">
    <property type="match status" value="1"/>
</dbReference>
<dbReference type="Gene3D" id="3.30.160.270">
    <property type="match status" value="1"/>
</dbReference>
<dbReference type="Gene3D" id="3.20.20.70">
    <property type="entry name" value="Aldolase class I"/>
    <property type="match status" value="1"/>
</dbReference>
<dbReference type="HAMAP" id="MF_01028">
    <property type="entry name" value="CimA"/>
    <property type="match status" value="1"/>
</dbReference>
<dbReference type="InterPro" id="IPR013709">
    <property type="entry name" value="2-isopropylmalate_synth_dimer"/>
</dbReference>
<dbReference type="InterPro" id="IPR002034">
    <property type="entry name" value="AIPM/Hcit_synth_CS"/>
</dbReference>
<dbReference type="InterPro" id="IPR013785">
    <property type="entry name" value="Aldolase_TIM"/>
</dbReference>
<dbReference type="InterPro" id="IPR024890">
    <property type="entry name" value="Citramalate_synthase_CimA"/>
</dbReference>
<dbReference type="InterPro" id="IPR011830">
    <property type="entry name" value="LEU1_arch"/>
</dbReference>
<dbReference type="InterPro" id="IPR054691">
    <property type="entry name" value="LeuA/HCS_post-cat"/>
</dbReference>
<dbReference type="InterPro" id="IPR036230">
    <property type="entry name" value="LeuA_allosteric_dom_sf"/>
</dbReference>
<dbReference type="InterPro" id="IPR000891">
    <property type="entry name" value="PYR_CT"/>
</dbReference>
<dbReference type="NCBIfam" id="TIGR02090">
    <property type="entry name" value="LEU1_arch"/>
    <property type="match status" value="1"/>
</dbReference>
<dbReference type="NCBIfam" id="NF002085">
    <property type="entry name" value="PRK00915.1-2"/>
    <property type="match status" value="1"/>
</dbReference>
<dbReference type="PANTHER" id="PTHR42880:SF2">
    <property type="entry name" value="(R)-CITRAMALATE SYNTHASE CIMA"/>
    <property type="match status" value="1"/>
</dbReference>
<dbReference type="PANTHER" id="PTHR42880">
    <property type="entry name" value="HOMOCITRATE SYNTHASE"/>
    <property type="match status" value="1"/>
</dbReference>
<dbReference type="Pfam" id="PF22617">
    <property type="entry name" value="HCS_D2"/>
    <property type="match status" value="1"/>
</dbReference>
<dbReference type="Pfam" id="PF00682">
    <property type="entry name" value="HMGL-like"/>
    <property type="match status" value="1"/>
</dbReference>
<dbReference type="Pfam" id="PF08502">
    <property type="entry name" value="LeuA_dimer"/>
    <property type="match status" value="1"/>
</dbReference>
<dbReference type="SMART" id="SM00917">
    <property type="entry name" value="LeuA_dimer"/>
    <property type="match status" value="1"/>
</dbReference>
<dbReference type="SUPFAM" id="SSF110921">
    <property type="entry name" value="2-isopropylmalate synthase LeuA, allosteric (dimerisation) domain"/>
    <property type="match status" value="1"/>
</dbReference>
<dbReference type="SUPFAM" id="SSF51569">
    <property type="entry name" value="Aldolase"/>
    <property type="match status" value="1"/>
</dbReference>
<dbReference type="PROSITE" id="PS00816">
    <property type="entry name" value="AIPM_HOMOCIT_SYNTH_2"/>
    <property type="match status" value="1"/>
</dbReference>
<dbReference type="PROSITE" id="PS50991">
    <property type="entry name" value="PYR_CT"/>
    <property type="match status" value="1"/>
</dbReference>
<protein>
    <recommendedName>
        <fullName evidence="1">Putative (R)-citramalate synthase CimA</fullName>
        <ecNumber evidence="1">2.3.3.21</ecNumber>
    </recommendedName>
</protein>
<accession>P58966</accession>
<gene>
    <name evidence="1" type="primary">cimA</name>
    <name type="ordered locus">MM_0671</name>
</gene>
<reference key="1">
    <citation type="journal article" date="2002" name="J. Mol. Microbiol. Biotechnol.">
        <title>The genome of Methanosarcina mazei: evidence for lateral gene transfer between Bacteria and Archaea.</title>
        <authorList>
            <person name="Deppenmeier U."/>
            <person name="Johann A."/>
            <person name="Hartsch T."/>
            <person name="Merkl R."/>
            <person name="Schmitz R.A."/>
            <person name="Martinez-Arias R."/>
            <person name="Henne A."/>
            <person name="Wiezer A."/>
            <person name="Baeumer S."/>
            <person name="Jacobi C."/>
            <person name="Brueggemann H."/>
            <person name="Lienard T."/>
            <person name="Christmann A."/>
            <person name="Boemecke M."/>
            <person name="Steckel S."/>
            <person name="Bhattacharyya A."/>
            <person name="Lykidis A."/>
            <person name="Overbeek R."/>
            <person name="Klenk H.-P."/>
            <person name="Gunsalus R.P."/>
            <person name="Fritz H.-J."/>
            <person name="Gottschalk G."/>
        </authorList>
    </citation>
    <scope>NUCLEOTIDE SEQUENCE [LARGE SCALE GENOMIC DNA]</scope>
    <source>
        <strain>ATCC BAA-159 / DSM 3647 / Goe1 / Go1 / JCM 11833 / OCM 88</strain>
    </source>
</reference>
<proteinExistence type="inferred from homology"/>
<evidence type="ECO:0000255" key="1">
    <source>
        <dbReference type="HAMAP-Rule" id="MF_01028"/>
    </source>
</evidence>
<evidence type="ECO:0000255" key="2">
    <source>
        <dbReference type="PROSITE-ProRule" id="PRU01151"/>
    </source>
</evidence>
<sequence>MRDGEQTPGVALTKEKKLLIARALDEMKINVIEAGSAITSAGERESVRAVANAGLSAEICSYCRIVKTDVDHALECDVDSIHLVVPVSDLHIRTKIKKDRDTVRQIAADVTEYAKEHGLIVELSGEDSSRADLGFLKAVYSDGIDAGADRLCFCDTVGLLVPEKTTEIFRDLSSSLKAPISIHCHNDFGLATANTVAALAAGAKQAHVTINGLGERAGNASLEEVVMCLEWLYKYDTGIKHEQIYRTSRLVSRLTGIPVSPNKALVGGNAFTHEAGIHVHGLLADKATYEPMSPEYIGRQRQIVLGKHAGRSSITLALKEMGLEADDAQTEEIFNRVKQMGDQGKHVTDADLQIIAETVLDIYKEPLVKLEEFTIVSGNRVTPTASIKLNVKDKEIVQAGIGNGPVDAVINAIRRAVSSCAEDVILEEYHVDAVTGGTDALVEVRVKLSKEGKSITASGARTDIIMASVEAVMNGLNRLVRAE</sequence>
<organism>
    <name type="scientific">Methanosarcina mazei (strain ATCC BAA-159 / DSM 3647 / Goe1 / Go1 / JCM 11833 / OCM 88)</name>
    <name type="common">Methanosarcina frisia</name>
    <dbReference type="NCBI Taxonomy" id="192952"/>
    <lineage>
        <taxon>Archaea</taxon>
        <taxon>Methanobacteriati</taxon>
        <taxon>Methanobacteriota</taxon>
        <taxon>Stenosarchaea group</taxon>
        <taxon>Methanomicrobia</taxon>
        <taxon>Methanosarcinales</taxon>
        <taxon>Methanosarcinaceae</taxon>
        <taxon>Methanosarcina</taxon>
    </lineage>
</organism>
<feature type="chain" id="PRO_0000140452" description="Putative (R)-citramalate synthase CimA">
    <location>
        <begin position="1"/>
        <end position="483"/>
    </location>
</feature>
<feature type="domain" description="Pyruvate carboxyltransferase" evidence="2">
    <location>
        <begin position="1"/>
        <end position="245"/>
    </location>
</feature>